<proteinExistence type="inferred from homology"/>
<sequence>MARVCQVTGKGPMVGNNVSHANNKTKRRFLPNLQSRRFWVESENRWVRLRVTAKAIRTIDKNGIDAVLADLRARGEAV</sequence>
<organism>
    <name type="scientific">Bordetella parapertussis (strain 12822 / ATCC BAA-587 / NCTC 13253)</name>
    <dbReference type="NCBI Taxonomy" id="257311"/>
    <lineage>
        <taxon>Bacteria</taxon>
        <taxon>Pseudomonadati</taxon>
        <taxon>Pseudomonadota</taxon>
        <taxon>Betaproteobacteria</taxon>
        <taxon>Burkholderiales</taxon>
        <taxon>Alcaligenaceae</taxon>
        <taxon>Bordetella</taxon>
    </lineage>
</organism>
<reference key="1">
    <citation type="journal article" date="2003" name="Nat. Genet.">
        <title>Comparative analysis of the genome sequences of Bordetella pertussis, Bordetella parapertussis and Bordetella bronchiseptica.</title>
        <authorList>
            <person name="Parkhill J."/>
            <person name="Sebaihia M."/>
            <person name="Preston A."/>
            <person name="Murphy L.D."/>
            <person name="Thomson N.R."/>
            <person name="Harris D.E."/>
            <person name="Holden M.T.G."/>
            <person name="Churcher C.M."/>
            <person name="Bentley S.D."/>
            <person name="Mungall K.L."/>
            <person name="Cerdeno-Tarraga A.-M."/>
            <person name="Temple L."/>
            <person name="James K.D."/>
            <person name="Harris B."/>
            <person name="Quail M.A."/>
            <person name="Achtman M."/>
            <person name="Atkin R."/>
            <person name="Baker S."/>
            <person name="Basham D."/>
            <person name="Bason N."/>
            <person name="Cherevach I."/>
            <person name="Chillingworth T."/>
            <person name="Collins M."/>
            <person name="Cronin A."/>
            <person name="Davis P."/>
            <person name="Doggett J."/>
            <person name="Feltwell T."/>
            <person name="Goble A."/>
            <person name="Hamlin N."/>
            <person name="Hauser H."/>
            <person name="Holroyd S."/>
            <person name="Jagels K."/>
            <person name="Leather S."/>
            <person name="Moule S."/>
            <person name="Norberczak H."/>
            <person name="O'Neil S."/>
            <person name="Ormond D."/>
            <person name="Price C."/>
            <person name="Rabbinowitsch E."/>
            <person name="Rutter S."/>
            <person name="Sanders M."/>
            <person name="Saunders D."/>
            <person name="Seeger K."/>
            <person name="Sharp S."/>
            <person name="Simmonds M."/>
            <person name="Skelton J."/>
            <person name="Squares R."/>
            <person name="Squares S."/>
            <person name="Stevens K."/>
            <person name="Unwin L."/>
            <person name="Whitehead S."/>
            <person name="Barrell B.G."/>
            <person name="Maskell D.J."/>
        </authorList>
    </citation>
    <scope>NUCLEOTIDE SEQUENCE [LARGE SCALE GENOMIC DNA]</scope>
    <source>
        <strain>12822 / ATCC BAA-587 / NCTC 13253</strain>
    </source>
</reference>
<gene>
    <name evidence="1" type="primary">rpmB</name>
    <name type="ordered locus">BPP1737</name>
</gene>
<comment type="similarity">
    <text evidence="1">Belongs to the bacterial ribosomal protein bL28 family.</text>
</comment>
<protein>
    <recommendedName>
        <fullName evidence="1">Large ribosomal subunit protein bL28</fullName>
    </recommendedName>
    <alternativeName>
        <fullName evidence="2">50S ribosomal protein L28</fullName>
    </alternativeName>
</protein>
<dbReference type="EMBL" id="BX640428">
    <property type="protein sequence ID" value="CAE37038.1"/>
    <property type="molecule type" value="Genomic_DNA"/>
</dbReference>
<dbReference type="RefSeq" id="WP_003810297.1">
    <property type="nucleotide sequence ID" value="NC_002928.3"/>
</dbReference>
<dbReference type="SMR" id="Q7W9L9"/>
<dbReference type="GeneID" id="93203501"/>
<dbReference type="KEGG" id="bpa:BPP1737"/>
<dbReference type="HOGENOM" id="CLU_064548_3_1_4"/>
<dbReference type="Proteomes" id="UP000001421">
    <property type="component" value="Chromosome"/>
</dbReference>
<dbReference type="GO" id="GO:0022625">
    <property type="term" value="C:cytosolic large ribosomal subunit"/>
    <property type="evidence" value="ECO:0007669"/>
    <property type="project" value="TreeGrafter"/>
</dbReference>
<dbReference type="GO" id="GO:0003735">
    <property type="term" value="F:structural constituent of ribosome"/>
    <property type="evidence" value="ECO:0007669"/>
    <property type="project" value="InterPro"/>
</dbReference>
<dbReference type="GO" id="GO:0006412">
    <property type="term" value="P:translation"/>
    <property type="evidence" value="ECO:0007669"/>
    <property type="project" value="UniProtKB-UniRule"/>
</dbReference>
<dbReference type="FunFam" id="2.30.170.40:FF:000001">
    <property type="entry name" value="50S ribosomal protein L28"/>
    <property type="match status" value="1"/>
</dbReference>
<dbReference type="Gene3D" id="2.30.170.40">
    <property type="entry name" value="Ribosomal protein L28/L24"/>
    <property type="match status" value="1"/>
</dbReference>
<dbReference type="HAMAP" id="MF_00373">
    <property type="entry name" value="Ribosomal_bL28"/>
    <property type="match status" value="1"/>
</dbReference>
<dbReference type="InterPro" id="IPR026569">
    <property type="entry name" value="Ribosomal_bL28"/>
</dbReference>
<dbReference type="InterPro" id="IPR034704">
    <property type="entry name" value="Ribosomal_bL28/bL31-like_sf"/>
</dbReference>
<dbReference type="InterPro" id="IPR001383">
    <property type="entry name" value="Ribosomal_bL28_bact-type"/>
</dbReference>
<dbReference type="InterPro" id="IPR037147">
    <property type="entry name" value="Ribosomal_bL28_sf"/>
</dbReference>
<dbReference type="NCBIfam" id="TIGR00009">
    <property type="entry name" value="L28"/>
    <property type="match status" value="1"/>
</dbReference>
<dbReference type="PANTHER" id="PTHR13528">
    <property type="entry name" value="39S RIBOSOMAL PROTEIN L28, MITOCHONDRIAL"/>
    <property type="match status" value="1"/>
</dbReference>
<dbReference type="PANTHER" id="PTHR13528:SF2">
    <property type="entry name" value="LARGE RIBOSOMAL SUBUNIT PROTEIN BL28M"/>
    <property type="match status" value="1"/>
</dbReference>
<dbReference type="Pfam" id="PF00830">
    <property type="entry name" value="Ribosomal_L28"/>
    <property type="match status" value="1"/>
</dbReference>
<dbReference type="SUPFAM" id="SSF143800">
    <property type="entry name" value="L28p-like"/>
    <property type="match status" value="1"/>
</dbReference>
<accession>Q7W9L9</accession>
<feature type="chain" id="PRO_0000178439" description="Large ribosomal subunit protein bL28">
    <location>
        <begin position="1"/>
        <end position="78"/>
    </location>
</feature>
<name>RL28_BORPA</name>
<keyword id="KW-0687">Ribonucleoprotein</keyword>
<keyword id="KW-0689">Ribosomal protein</keyword>
<evidence type="ECO:0000255" key="1">
    <source>
        <dbReference type="HAMAP-Rule" id="MF_00373"/>
    </source>
</evidence>
<evidence type="ECO:0000305" key="2"/>